<accession>B3W9Z0</accession>
<sequence>MQYPEPISKLIDSYMRLPGIGAKTATRLAFYTIDMNKDDVTAFAKSLVAAKEDLHYCSICGNITDEDPCAICRDKSRDQSTILVVEQPKDVMSIDRAQDYHGLYHVLHGVLSPIEGRGPEDLNIESLLKRLKANKAVKEVIIATNATPEGEATAQYLARLIKPAGIKVTRLAHGLSVGSDIEYADEMTLMKAVEGRTEL</sequence>
<evidence type="ECO:0000255" key="1">
    <source>
        <dbReference type="HAMAP-Rule" id="MF_00017"/>
    </source>
</evidence>
<comment type="function">
    <text evidence="1">May play a role in DNA repair. It seems to be involved in an RecBC-independent recombinational process of DNA repair. It may act with RecF and RecO.</text>
</comment>
<comment type="similarity">
    <text evidence="1">Belongs to the RecR family.</text>
</comment>
<organism>
    <name type="scientific">Lacticaseibacillus casei (strain BL23)</name>
    <name type="common">Lactobacillus casei</name>
    <dbReference type="NCBI Taxonomy" id="543734"/>
    <lineage>
        <taxon>Bacteria</taxon>
        <taxon>Bacillati</taxon>
        <taxon>Bacillota</taxon>
        <taxon>Bacilli</taxon>
        <taxon>Lactobacillales</taxon>
        <taxon>Lactobacillaceae</taxon>
        <taxon>Lacticaseibacillus</taxon>
    </lineage>
</organism>
<feature type="chain" id="PRO_1000089740" description="Recombination protein RecR">
    <location>
        <begin position="1"/>
        <end position="199"/>
    </location>
</feature>
<feature type="domain" description="Toprim" evidence="1">
    <location>
        <begin position="80"/>
        <end position="176"/>
    </location>
</feature>
<feature type="zinc finger region" description="C4-type" evidence="1">
    <location>
        <begin position="57"/>
        <end position="72"/>
    </location>
</feature>
<protein>
    <recommendedName>
        <fullName evidence="1">Recombination protein RecR</fullName>
    </recommendedName>
</protein>
<dbReference type="EMBL" id="FM177140">
    <property type="protein sequence ID" value="CAQ67509.1"/>
    <property type="molecule type" value="Genomic_DNA"/>
</dbReference>
<dbReference type="SMR" id="B3W9Z0"/>
<dbReference type="KEGG" id="lcb:LCABL_24430"/>
<dbReference type="HOGENOM" id="CLU_060739_1_0_9"/>
<dbReference type="GO" id="GO:0003677">
    <property type="term" value="F:DNA binding"/>
    <property type="evidence" value="ECO:0007669"/>
    <property type="project" value="UniProtKB-UniRule"/>
</dbReference>
<dbReference type="GO" id="GO:0008270">
    <property type="term" value="F:zinc ion binding"/>
    <property type="evidence" value="ECO:0007669"/>
    <property type="project" value="UniProtKB-KW"/>
</dbReference>
<dbReference type="GO" id="GO:0006310">
    <property type="term" value="P:DNA recombination"/>
    <property type="evidence" value="ECO:0007669"/>
    <property type="project" value="UniProtKB-UniRule"/>
</dbReference>
<dbReference type="GO" id="GO:0006281">
    <property type="term" value="P:DNA repair"/>
    <property type="evidence" value="ECO:0007669"/>
    <property type="project" value="UniProtKB-UniRule"/>
</dbReference>
<dbReference type="CDD" id="cd01025">
    <property type="entry name" value="TOPRIM_recR"/>
    <property type="match status" value="1"/>
</dbReference>
<dbReference type="Gene3D" id="3.30.60.80">
    <property type="match status" value="1"/>
</dbReference>
<dbReference type="Gene3D" id="3.40.1360.10">
    <property type="match status" value="1"/>
</dbReference>
<dbReference type="Gene3D" id="6.10.250.240">
    <property type="match status" value="1"/>
</dbReference>
<dbReference type="Gene3D" id="1.10.8.420">
    <property type="entry name" value="RecR Domain 1"/>
    <property type="match status" value="1"/>
</dbReference>
<dbReference type="HAMAP" id="MF_00017">
    <property type="entry name" value="RecR"/>
    <property type="match status" value="1"/>
</dbReference>
<dbReference type="InterPro" id="IPR000093">
    <property type="entry name" value="DNA_Rcmb_RecR"/>
</dbReference>
<dbReference type="InterPro" id="IPR023627">
    <property type="entry name" value="Rcmb_RecR"/>
</dbReference>
<dbReference type="InterPro" id="IPR015967">
    <property type="entry name" value="Rcmb_RecR_Znf"/>
</dbReference>
<dbReference type="InterPro" id="IPR006171">
    <property type="entry name" value="TOPRIM_dom"/>
</dbReference>
<dbReference type="InterPro" id="IPR034137">
    <property type="entry name" value="TOPRIM_RecR"/>
</dbReference>
<dbReference type="NCBIfam" id="TIGR00615">
    <property type="entry name" value="recR"/>
    <property type="match status" value="1"/>
</dbReference>
<dbReference type="PANTHER" id="PTHR30446">
    <property type="entry name" value="RECOMBINATION PROTEIN RECR"/>
    <property type="match status" value="1"/>
</dbReference>
<dbReference type="PANTHER" id="PTHR30446:SF0">
    <property type="entry name" value="RECOMBINATION PROTEIN RECR"/>
    <property type="match status" value="1"/>
</dbReference>
<dbReference type="Pfam" id="PF21175">
    <property type="entry name" value="RecR_C"/>
    <property type="match status" value="1"/>
</dbReference>
<dbReference type="Pfam" id="PF21176">
    <property type="entry name" value="RecR_HhH"/>
    <property type="match status" value="1"/>
</dbReference>
<dbReference type="Pfam" id="PF02132">
    <property type="entry name" value="RecR_ZnF"/>
    <property type="match status" value="1"/>
</dbReference>
<dbReference type="Pfam" id="PF13662">
    <property type="entry name" value="Toprim_4"/>
    <property type="match status" value="1"/>
</dbReference>
<dbReference type="SMART" id="SM00493">
    <property type="entry name" value="TOPRIM"/>
    <property type="match status" value="1"/>
</dbReference>
<dbReference type="SUPFAM" id="SSF111304">
    <property type="entry name" value="Recombination protein RecR"/>
    <property type="match status" value="1"/>
</dbReference>
<dbReference type="PROSITE" id="PS01300">
    <property type="entry name" value="RECR"/>
    <property type="match status" value="1"/>
</dbReference>
<dbReference type="PROSITE" id="PS50880">
    <property type="entry name" value="TOPRIM"/>
    <property type="match status" value="1"/>
</dbReference>
<gene>
    <name evidence="1" type="primary">recR</name>
    <name type="ordered locus">LCABL_24430</name>
</gene>
<keyword id="KW-0227">DNA damage</keyword>
<keyword id="KW-0233">DNA recombination</keyword>
<keyword id="KW-0234">DNA repair</keyword>
<keyword id="KW-0479">Metal-binding</keyword>
<keyword id="KW-0862">Zinc</keyword>
<keyword id="KW-0863">Zinc-finger</keyword>
<reference key="1">
    <citation type="submission" date="2008-06" db="EMBL/GenBank/DDBJ databases">
        <title>Lactobacillus casei BL23 complete genome sequence.</title>
        <authorList>
            <person name="Maze A."/>
            <person name="Boel G."/>
            <person name="Bourand A."/>
            <person name="Loux V."/>
            <person name="Gibrat J.F."/>
            <person name="Zuniga M."/>
            <person name="Hartke A."/>
            <person name="Deutscher J."/>
        </authorList>
    </citation>
    <scope>NUCLEOTIDE SEQUENCE [LARGE SCALE GENOMIC DNA]</scope>
    <source>
        <strain>BL23</strain>
    </source>
</reference>
<proteinExistence type="inferred from homology"/>
<name>RECR_LACCB</name>